<protein>
    <recommendedName>
        <fullName>Zinc transporter 10</fullName>
    </recommendedName>
    <alternativeName>
        <fullName>ZRT/IRT-like protein 10</fullName>
        <shortName>OsZIP10</shortName>
    </alternativeName>
</protein>
<accession>Q5Z653</accession>
<accession>C7J471</accession>
<keyword id="KW-1003">Cell membrane</keyword>
<keyword id="KW-0406">Ion transport</keyword>
<keyword id="KW-0472">Membrane</keyword>
<keyword id="KW-1185">Reference proteome</keyword>
<keyword id="KW-0732">Signal</keyword>
<keyword id="KW-0812">Transmembrane</keyword>
<keyword id="KW-1133">Transmembrane helix</keyword>
<keyword id="KW-0813">Transport</keyword>
<keyword id="KW-0862">Zinc</keyword>
<keyword id="KW-0864">Zinc transport</keyword>
<organism>
    <name type="scientific">Oryza sativa subsp. japonica</name>
    <name type="common">Rice</name>
    <dbReference type="NCBI Taxonomy" id="39947"/>
    <lineage>
        <taxon>Eukaryota</taxon>
        <taxon>Viridiplantae</taxon>
        <taxon>Streptophyta</taxon>
        <taxon>Embryophyta</taxon>
        <taxon>Tracheophyta</taxon>
        <taxon>Spermatophyta</taxon>
        <taxon>Magnoliopsida</taxon>
        <taxon>Liliopsida</taxon>
        <taxon>Poales</taxon>
        <taxon>Poaceae</taxon>
        <taxon>BOP clade</taxon>
        <taxon>Oryzoideae</taxon>
        <taxon>Oryzeae</taxon>
        <taxon>Oryzinae</taxon>
        <taxon>Oryza</taxon>
        <taxon>Oryza sativa</taxon>
    </lineage>
</organism>
<comment type="function">
    <text evidence="1">Zinc transporter that may be involved in zinc uptake from the rhizosphere.</text>
</comment>
<comment type="subcellular location">
    <subcellularLocation>
        <location evidence="3">Cell membrane</location>
        <topology evidence="3">Multi-pass membrane protein</topology>
    </subcellularLocation>
</comment>
<comment type="similarity">
    <text evidence="3">Belongs to the ZIP transporter (TC 2.A.5) family.</text>
</comment>
<comment type="sequence caution" evidence="3">
    <conflict type="erroneous gene model prediction">
        <sequence resource="EMBL-CDS" id="BAD54497"/>
    </conflict>
</comment>
<comment type="sequence caution" evidence="3">
    <conflict type="erroneous gene model prediction">
        <sequence resource="EMBL-CDS" id="BAD54538"/>
    </conflict>
</comment>
<comment type="sequence caution" evidence="3">
    <conflict type="erroneous gene model prediction">
        <sequence resource="EMBL-CDS" id="BAH93579"/>
    </conflict>
</comment>
<dbReference type="EMBL" id="AP005456">
    <property type="protein sequence ID" value="BAD54497.1"/>
    <property type="status" value="ALT_SEQ"/>
    <property type="molecule type" value="Genomic_DNA"/>
</dbReference>
<dbReference type="EMBL" id="AP005458">
    <property type="protein sequence ID" value="BAD54538.1"/>
    <property type="status" value="ALT_SEQ"/>
    <property type="molecule type" value="Genomic_DNA"/>
</dbReference>
<dbReference type="EMBL" id="AP008212">
    <property type="protein sequence ID" value="BAH93579.1"/>
    <property type="status" value="ALT_SEQ"/>
    <property type="molecule type" value="Genomic_DNA"/>
</dbReference>
<dbReference type="EMBL" id="AP014962">
    <property type="status" value="NOT_ANNOTATED_CDS"/>
    <property type="molecule type" value="Genomic_DNA"/>
</dbReference>
<dbReference type="FunCoup" id="Q5Z653">
    <property type="interactions" value="1957"/>
</dbReference>
<dbReference type="STRING" id="39947.Q5Z653"/>
<dbReference type="PaxDb" id="39947-Q5Z653"/>
<dbReference type="KEGG" id="dosa:Os06g0566300"/>
<dbReference type="eggNOG" id="KOG1558">
    <property type="taxonomic scope" value="Eukaryota"/>
</dbReference>
<dbReference type="HOGENOM" id="CLU_027089_3_0_1"/>
<dbReference type="InParanoid" id="Q5Z653"/>
<dbReference type="Proteomes" id="UP000000763">
    <property type="component" value="Chromosome 6"/>
</dbReference>
<dbReference type="Proteomes" id="UP000059680">
    <property type="component" value="Chromosome 6"/>
</dbReference>
<dbReference type="GO" id="GO:0005886">
    <property type="term" value="C:plasma membrane"/>
    <property type="evidence" value="ECO:0000318"/>
    <property type="project" value="GO_Central"/>
</dbReference>
<dbReference type="GO" id="GO:0005385">
    <property type="term" value="F:zinc ion transmembrane transporter activity"/>
    <property type="evidence" value="ECO:0000318"/>
    <property type="project" value="GO_Central"/>
</dbReference>
<dbReference type="GO" id="GO:0071577">
    <property type="term" value="P:zinc ion transmembrane transport"/>
    <property type="evidence" value="ECO:0000318"/>
    <property type="project" value="GO_Central"/>
</dbReference>
<dbReference type="InterPro" id="IPR003689">
    <property type="entry name" value="ZIP"/>
</dbReference>
<dbReference type="InterPro" id="IPR004698">
    <property type="entry name" value="Zn/Fe_permease_fun/pln"/>
</dbReference>
<dbReference type="NCBIfam" id="TIGR00820">
    <property type="entry name" value="zip"/>
    <property type="match status" value="1"/>
</dbReference>
<dbReference type="PANTHER" id="PTHR11040:SF216">
    <property type="entry name" value="ZINC TRANSPORTER 10"/>
    <property type="match status" value="1"/>
</dbReference>
<dbReference type="PANTHER" id="PTHR11040">
    <property type="entry name" value="ZINC/IRON TRANSPORTER"/>
    <property type="match status" value="1"/>
</dbReference>
<dbReference type="Pfam" id="PF02535">
    <property type="entry name" value="Zip"/>
    <property type="match status" value="1"/>
</dbReference>
<name>ZIP10_ORYSJ</name>
<reference key="1">
    <citation type="journal article" date="2005" name="Nature">
        <title>The map-based sequence of the rice genome.</title>
        <authorList>
            <consortium name="International rice genome sequencing project (IRGSP)"/>
        </authorList>
    </citation>
    <scope>NUCLEOTIDE SEQUENCE [LARGE SCALE GENOMIC DNA]</scope>
    <source>
        <strain>cv. Nipponbare</strain>
    </source>
</reference>
<reference key="2">
    <citation type="journal article" date="2008" name="Nucleic Acids Res.">
        <title>The rice annotation project database (RAP-DB): 2008 update.</title>
        <authorList>
            <consortium name="The rice annotation project (RAP)"/>
        </authorList>
    </citation>
    <scope>GENOME REANNOTATION</scope>
    <source>
        <strain>cv. Nipponbare</strain>
    </source>
</reference>
<reference key="3">
    <citation type="journal article" date="2013" name="Rice">
        <title>Improvement of the Oryza sativa Nipponbare reference genome using next generation sequence and optical map data.</title>
        <authorList>
            <person name="Kawahara Y."/>
            <person name="de la Bastide M."/>
            <person name="Hamilton J.P."/>
            <person name="Kanamori H."/>
            <person name="McCombie W.R."/>
            <person name="Ouyang S."/>
            <person name="Schwartz D.C."/>
            <person name="Tanaka T."/>
            <person name="Wu J."/>
            <person name="Zhou S."/>
            <person name="Childs K.L."/>
            <person name="Davidson R.M."/>
            <person name="Lin H."/>
            <person name="Quesada-Ocampo L."/>
            <person name="Vaillancourt B."/>
            <person name="Sakai H."/>
            <person name="Lee S.S."/>
            <person name="Kim J."/>
            <person name="Numa H."/>
            <person name="Itoh T."/>
            <person name="Buell C.R."/>
            <person name="Matsumoto T."/>
        </authorList>
    </citation>
    <scope>GENOME REANNOTATION</scope>
    <source>
        <strain>cv. Nipponbare</strain>
    </source>
</reference>
<gene>
    <name type="primary">ZIP10</name>
    <name type="ordered locus">Os06g0566300</name>
    <name type="ordered locus">LOC_Os06g37010</name>
    <name type="ORF">P0513E02.27</name>
    <name type="ORF">P0567G03.8</name>
</gene>
<sequence>MESSSSSSYIPFIRQIAASVSAASCDAVVGGGGDKDEECRDEAAALRLKMVAVAAILIAGAAGVAIPLVGRRRRGGGGGGGGGASSGGLFVLAKAFAAGVILATGFVHMLHDAEHALSNPCLPHSPWRRFPFPGFVAMLAALATLVVDFVGTHFYERKHRQEEAAAAAEEAAAALLEDGGALPVGDGEGRDGRGGKRDAMHIVGIHAHAAAHRHSHAHVHGACHGGAVNDAHAHGHGHGHEEGPSARHVVVSQILELGIVSHSVIIGLSLGVSQSPCTIKPLVAALSFHQFFEGFALGGCISEAQLKNFSAFLMAFFFAITTPAGITVGAAVASFYNPNSPRALVVEGILDSMSAGILIYMALVDLIAADFLSRKMSCNPRLQVGSYIALFLGAMAMAALALWA</sequence>
<feature type="signal peptide" evidence="2">
    <location>
        <begin position="1"/>
        <end position="22"/>
    </location>
</feature>
<feature type="chain" id="PRO_0000398334" description="Zinc transporter 10">
    <location>
        <begin position="23"/>
        <end position="404"/>
    </location>
</feature>
<feature type="topological domain" description="Extracellular" evidence="2">
    <location>
        <begin position="23"/>
        <end position="49"/>
    </location>
</feature>
<feature type="transmembrane region" description="Helical" evidence="2">
    <location>
        <begin position="50"/>
        <end position="70"/>
    </location>
</feature>
<feature type="topological domain" description="Cytoplasmic" evidence="2">
    <location>
        <begin position="71"/>
        <end position="86"/>
    </location>
</feature>
<feature type="transmembrane region" description="Helical" evidence="2">
    <location>
        <begin position="87"/>
        <end position="107"/>
    </location>
</feature>
<feature type="topological domain" description="Extracellular" evidence="2">
    <location>
        <begin position="108"/>
        <end position="129"/>
    </location>
</feature>
<feature type="transmembrane region" description="Helical" evidence="2">
    <location>
        <begin position="130"/>
        <end position="150"/>
    </location>
</feature>
<feature type="topological domain" description="Cytoplasmic" evidence="2">
    <location>
        <begin position="151"/>
        <end position="248"/>
    </location>
</feature>
<feature type="transmembrane region" description="Helical" evidence="2">
    <location>
        <begin position="249"/>
        <end position="269"/>
    </location>
</feature>
<feature type="topological domain" description="Extracellular" evidence="2">
    <location>
        <begin position="270"/>
        <end position="280"/>
    </location>
</feature>
<feature type="transmembrane region" description="Helical" evidence="2">
    <location>
        <begin position="281"/>
        <end position="301"/>
    </location>
</feature>
<feature type="topological domain" description="Cytoplasmic" evidence="2">
    <location>
        <begin position="302"/>
        <end position="311"/>
    </location>
</feature>
<feature type="transmembrane region" description="Helical" evidence="2">
    <location>
        <begin position="312"/>
        <end position="332"/>
    </location>
</feature>
<feature type="topological domain" description="Extracellular" evidence="2">
    <location>
        <begin position="333"/>
        <end position="343"/>
    </location>
</feature>
<feature type="transmembrane region" description="Helical" evidence="2">
    <location>
        <begin position="344"/>
        <end position="364"/>
    </location>
</feature>
<feature type="topological domain" description="Cytoplasmic" evidence="2">
    <location>
        <begin position="365"/>
        <end position="383"/>
    </location>
</feature>
<feature type="transmembrane region" description="Helical" evidence="2">
    <location>
        <begin position="384"/>
        <end position="404"/>
    </location>
</feature>
<evidence type="ECO:0000250" key="1"/>
<evidence type="ECO:0000255" key="2"/>
<evidence type="ECO:0000305" key="3"/>
<proteinExistence type="inferred from homology"/>